<evidence type="ECO:0000250" key="1"/>
<evidence type="ECO:0000305" key="2"/>
<reference key="1">
    <citation type="submission" date="2005-10" db="EMBL/GenBank/DDBJ databases">
        <authorList>
            <consortium name="NIH - Mammalian Gene Collection (MGC) project"/>
        </authorList>
    </citation>
    <scope>NUCLEOTIDE SEQUENCE [LARGE SCALE MRNA]</scope>
    <source>
        <strain>Crossbred X Angus</strain>
        <tissue>Liver</tissue>
    </source>
</reference>
<gene>
    <name type="primary">AAMDC</name>
</gene>
<dbReference type="EMBL" id="BC108191">
    <property type="protein sequence ID" value="AAI08192.1"/>
    <property type="molecule type" value="mRNA"/>
</dbReference>
<dbReference type="RefSeq" id="NP_001032550.1">
    <property type="nucleotide sequence ID" value="NM_001037473.2"/>
</dbReference>
<dbReference type="RefSeq" id="XP_005226765.1">
    <property type="nucleotide sequence ID" value="XM_005226708.5"/>
</dbReference>
<dbReference type="RefSeq" id="XP_010819133.1">
    <property type="nucleotide sequence ID" value="XM_010820831.4"/>
</dbReference>
<dbReference type="RefSeq" id="XP_010819135.1">
    <property type="nucleotide sequence ID" value="XM_010820833.4"/>
</dbReference>
<dbReference type="RefSeq" id="XP_059738950.1">
    <property type="nucleotide sequence ID" value="XM_059882967.1"/>
</dbReference>
<dbReference type="SMR" id="Q32PA8"/>
<dbReference type="FunCoup" id="Q32PA8">
    <property type="interactions" value="185"/>
</dbReference>
<dbReference type="STRING" id="9913.ENSBTAP00000022993"/>
<dbReference type="PaxDb" id="9913-ENSBTAP00000022993"/>
<dbReference type="PeptideAtlas" id="Q32PA8"/>
<dbReference type="Ensembl" id="ENSBTAT00000022993.4">
    <property type="protein sequence ID" value="ENSBTAP00000022993.2"/>
    <property type="gene ID" value="ENSBTAG00000017298.4"/>
</dbReference>
<dbReference type="GeneID" id="533224"/>
<dbReference type="KEGG" id="bta:533224"/>
<dbReference type="CTD" id="28971"/>
<dbReference type="VEuPathDB" id="HostDB:ENSBTAG00000017298"/>
<dbReference type="VGNC" id="VGNC:25444">
    <property type="gene designation" value="AAMDC"/>
</dbReference>
<dbReference type="eggNOG" id="ENOG502S00Z">
    <property type="taxonomic scope" value="Eukaryota"/>
</dbReference>
<dbReference type="GeneTree" id="ENSGT00390000011958"/>
<dbReference type="HOGENOM" id="CLU_074390_4_0_1"/>
<dbReference type="InParanoid" id="Q32PA8"/>
<dbReference type="OMA" id="AEYNKMA"/>
<dbReference type="OrthoDB" id="413520at2759"/>
<dbReference type="TreeFam" id="TF332083"/>
<dbReference type="Proteomes" id="UP000009136">
    <property type="component" value="Chromosome 29"/>
</dbReference>
<dbReference type="Bgee" id="ENSBTAG00000017298">
    <property type="expression patterns" value="Expressed in semen and 105 other cell types or tissues"/>
</dbReference>
<dbReference type="GO" id="GO:0005737">
    <property type="term" value="C:cytoplasm"/>
    <property type="evidence" value="ECO:0000250"/>
    <property type="project" value="UniProtKB"/>
</dbReference>
<dbReference type="GO" id="GO:0045600">
    <property type="term" value="P:positive regulation of fat cell differentiation"/>
    <property type="evidence" value="ECO:0000318"/>
    <property type="project" value="GO_Central"/>
</dbReference>
<dbReference type="CDD" id="cd05126">
    <property type="entry name" value="Mth938"/>
    <property type="match status" value="1"/>
</dbReference>
<dbReference type="FunFam" id="3.40.1230.10:FF:000001">
    <property type="entry name" value="Adipogenesis-associated, Mth938 domain-containing"/>
    <property type="match status" value="1"/>
</dbReference>
<dbReference type="Gene3D" id="3.40.1230.10">
    <property type="entry name" value="MTH938-like"/>
    <property type="match status" value="1"/>
</dbReference>
<dbReference type="InterPro" id="IPR034096">
    <property type="entry name" value="AAMDC"/>
</dbReference>
<dbReference type="InterPro" id="IPR036748">
    <property type="entry name" value="MTH938-like_sf"/>
</dbReference>
<dbReference type="InterPro" id="IPR007523">
    <property type="entry name" value="NDUFAF3/AAMDC"/>
</dbReference>
<dbReference type="PANTHER" id="PTHR15811">
    <property type="entry name" value="MTH938 DOMAIN-CONTAINING PROTEIN"/>
    <property type="match status" value="1"/>
</dbReference>
<dbReference type="PANTHER" id="PTHR15811:SF5">
    <property type="entry name" value="MTH938 DOMAIN-CONTAINING PROTEIN"/>
    <property type="match status" value="1"/>
</dbReference>
<dbReference type="Pfam" id="PF04430">
    <property type="entry name" value="DUF498"/>
    <property type="match status" value="1"/>
</dbReference>
<dbReference type="SUPFAM" id="SSF64076">
    <property type="entry name" value="MTH938-like"/>
    <property type="match status" value="1"/>
</dbReference>
<comment type="function">
    <text evidence="1">May play a role in preadipocyte differentiation and adipogenesis.</text>
</comment>
<comment type="subcellular location">
    <subcellularLocation>
        <location evidence="1">Cytoplasm</location>
    </subcellularLocation>
    <text evidence="1">Diffuse distribution with some highly concentrated spots around the nucleus.</text>
</comment>
<comment type="similarity">
    <text evidence="2">Belongs to the AAMDC family.</text>
</comment>
<proteinExistence type="evidence at transcript level"/>
<sequence length="122" mass="13388">MSSPEIASLSWGQMKVQGSTKIYKDCKVWPGGSRDWDWRETGTEHSPGVQPADVEEVVEKGVQILVIGRGMSEALKVPPSTVEYLKKKGIDVRVLQTEQAVKEYNALATQGIRVGGVFHSTC</sequence>
<protein>
    <recommendedName>
        <fullName>Mth938 domain-containing protein</fullName>
    </recommendedName>
</protein>
<feature type="chain" id="PRO_0000239813" description="Mth938 domain-containing protein">
    <location>
        <begin position="1"/>
        <end position="122"/>
    </location>
</feature>
<feature type="region of interest" description="MTH138-like domain" evidence="1">
    <location>
        <begin position="6"/>
        <end position="122"/>
    </location>
</feature>
<accession>Q32PA8</accession>
<organism>
    <name type="scientific">Bos taurus</name>
    <name type="common">Bovine</name>
    <dbReference type="NCBI Taxonomy" id="9913"/>
    <lineage>
        <taxon>Eukaryota</taxon>
        <taxon>Metazoa</taxon>
        <taxon>Chordata</taxon>
        <taxon>Craniata</taxon>
        <taxon>Vertebrata</taxon>
        <taxon>Euteleostomi</taxon>
        <taxon>Mammalia</taxon>
        <taxon>Eutheria</taxon>
        <taxon>Laurasiatheria</taxon>
        <taxon>Artiodactyla</taxon>
        <taxon>Ruminantia</taxon>
        <taxon>Pecora</taxon>
        <taxon>Bovidae</taxon>
        <taxon>Bovinae</taxon>
        <taxon>Bos</taxon>
    </lineage>
</organism>
<name>AAMDC_BOVIN</name>
<keyword id="KW-0963">Cytoplasm</keyword>
<keyword id="KW-1185">Reference proteome</keyword>